<dbReference type="EC" id="5.3.4.1" evidence="4"/>
<dbReference type="EMBL" id="CR857946">
    <property type="protein sequence ID" value="CAH90193.1"/>
    <property type="molecule type" value="mRNA"/>
</dbReference>
<dbReference type="RefSeq" id="NP_001127250.1">
    <property type="nucleotide sequence ID" value="NM_001133778.1"/>
</dbReference>
<dbReference type="BMRB" id="Q5RDG4"/>
<dbReference type="SMR" id="Q5RDG4"/>
<dbReference type="FunCoup" id="Q5RDG4">
    <property type="interactions" value="1940"/>
</dbReference>
<dbReference type="STRING" id="9601.ENSPPYP00000007276"/>
<dbReference type="GeneID" id="100174305"/>
<dbReference type="KEGG" id="pon:100174305"/>
<dbReference type="CTD" id="2923"/>
<dbReference type="eggNOG" id="KOG0190">
    <property type="taxonomic scope" value="Eukaryota"/>
</dbReference>
<dbReference type="InParanoid" id="Q5RDG4"/>
<dbReference type="OrthoDB" id="427280at2759"/>
<dbReference type="Proteomes" id="UP000001595">
    <property type="component" value="Unplaced"/>
</dbReference>
<dbReference type="GO" id="GO:0009986">
    <property type="term" value="C:cell surface"/>
    <property type="evidence" value="ECO:0007669"/>
    <property type="project" value="TreeGrafter"/>
</dbReference>
<dbReference type="GO" id="GO:0005783">
    <property type="term" value="C:endoplasmic reticulum"/>
    <property type="evidence" value="ECO:0000250"/>
    <property type="project" value="UniProtKB"/>
</dbReference>
<dbReference type="GO" id="GO:0005788">
    <property type="term" value="C:endoplasmic reticulum lumen"/>
    <property type="evidence" value="ECO:0007669"/>
    <property type="project" value="UniProtKB-SubCell"/>
</dbReference>
<dbReference type="GO" id="GO:0042470">
    <property type="term" value="C:melanosome"/>
    <property type="evidence" value="ECO:0007669"/>
    <property type="project" value="UniProtKB-SubCell"/>
</dbReference>
<dbReference type="GO" id="GO:0003756">
    <property type="term" value="F:protein disulfide isomerase activity"/>
    <property type="evidence" value="ECO:0007669"/>
    <property type="project" value="UniProtKB-EC"/>
</dbReference>
<dbReference type="GO" id="GO:0002250">
    <property type="term" value="P:adaptive immune response"/>
    <property type="evidence" value="ECO:0007669"/>
    <property type="project" value="UniProtKB-KW"/>
</dbReference>
<dbReference type="GO" id="GO:0006457">
    <property type="term" value="P:protein folding"/>
    <property type="evidence" value="ECO:0007669"/>
    <property type="project" value="TreeGrafter"/>
</dbReference>
<dbReference type="GO" id="GO:0034976">
    <property type="term" value="P:response to endoplasmic reticulum stress"/>
    <property type="evidence" value="ECO:0007669"/>
    <property type="project" value="TreeGrafter"/>
</dbReference>
<dbReference type="CDD" id="cd02995">
    <property type="entry name" value="PDI_a_PDI_a'_C"/>
    <property type="match status" value="1"/>
</dbReference>
<dbReference type="CDD" id="cd03073">
    <property type="entry name" value="PDI_b'_ERp72_ERp57"/>
    <property type="match status" value="1"/>
</dbReference>
<dbReference type="CDD" id="cd03069">
    <property type="entry name" value="PDI_b_ERp57"/>
    <property type="match status" value="1"/>
</dbReference>
<dbReference type="FunFam" id="3.40.30.10:FF:000045">
    <property type="entry name" value="Disulfide-isomerase A3"/>
    <property type="match status" value="1"/>
</dbReference>
<dbReference type="FunFam" id="3.40.30.10:FF:000054">
    <property type="entry name" value="Disulfide-isomerase A3"/>
    <property type="match status" value="1"/>
</dbReference>
<dbReference type="FunFam" id="3.40.30.10:FF:000077">
    <property type="entry name" value="Protein disulfide-isomerase"/>
    <property type="match status" value="1"/>
</dbReference>
<dbReference type="FunFam" id="3.40.30.10:FF:000017">
    <property type="entry name" value="Protein disulfide-isomerase A4"/>
    <property type="match status" value="1"/>
</dbReference>
<dbReference type="Gene3D" id="3.40.30.10">
    <property type="entry name" value="Glutaredoxin"/>
    <property type="match status" value="4"/>
</dbReference>
<dbReference type="InterPro" id="IPR005788">
    <property type="entry name" value="PDI_thioredoxin-like_dom"/>
</dbReference>
<dbReference type="InterPro" id="IPR041868">
    <property type="entry name" value="PDIA3_PDI_b"/>
</dbReference>
<dbReference type="InterPro" id="IPR005792">
    <property type="entry name" value="Prot_disulphide_isomerase"/>
</dbReference>
<dbReference type="InterPro" id="IPR036249">
    <property type="entry name" value="Thioredoxin-like_sf"/>
</dbReference>
<dbReference type="InterPro" id="IPR017937">
    <property type="entry name" value="Thioredoxin_CS"/>
</dbReference>
<dbReference type="InterPro" id="IPR013766">
    <property type="entry name" value="Thioredoxin_domain"/>
</dbReference>
<dbReference type="NCBIfam" id="TIGR01130">
    <property type="entry name" value="ER_PDI_fam"/>
    <property type="match status" value="1"/>
</dbReference>
<dbReference type="NCBIfam" id="TIGR01126">
    <property type="entry name" value="pdi_dom"/>
    <property type="match status" value="2"/>
</dbReference>
<dbReference type="PANTHER" id="PTHR18929">
    <property type="entry name" value="PROTEIN DISULFIDE ISOMERASE"/>
    <property type="match status" value="1"/>
</dbReference>
<dbReference type="PANTHER" id="PTHR18929:SF132">
    <property type="entry name" value="PROTEIN DISULFIDE-ISOMERASE A3"/>
    <property type="match status" value="1"/>
</dbReference>
<dbReference type="Pfam" id="PF00085">
    <property type="entry name" value="Thioredoxin"/>
    <property type="match status" value="2"/>
</dbReference>
<dbReference type="Pfam" id="PF13848">
    <property type="entry name" value="Thioredoxin_6"/>
    <property type="match status" value="1"/>
</dbReference>
<dbReference type="PRINTS" id="PR00421">
    <property type="entry name" value="THIOREDOXIN"/>
</dbReference>
<dbReference type="SUPFAM" id="SSF52833">
    <property type="entry name" value="Thioredoxin-like"/>
    <property type="match status" value="4"/>
</dbReference>
<dbReference type="PROSITE" id="PS00194">
    <property type="entry name" value="THIOREDOXIN_1"/>
    <property type="match status" value="2"/>
</dbReference>
<dbReference type="PROSITE" id="PS51352">
    <property type="entry name" value="THIOREDOXIN_2"/>
    <property type="match status" value="2"/>
</dbReference>
<evidence type="ECO:0000250" key="1"/>
<evidence type="ECO:0000250" key="2">
    <source>
        <dbReference type="UniProtKB" id="P11598"/>
    </source>
</evidence>
<evidence type="ECO:0000250" key="3">
    <source>
        <dbReference type="UniProtKB" id="P27773"/>
    </source>
</evidence>
<evidence type="ECO:0000250" key="4">
    <source>
        <dbReference type="UniProtKB" id="P30101"/>
    </source>
</evidence>
<evidence type="ECO:0000255" key="5"/>
<evidence type="ECO:0000255" key="6">
    <source>
        <dbReference type="PROSITE-ProRule" id="PRU00691"/>
    </source>
</evidence>
<evidence type="ECO:0000256" key="7">
    <source>
        <dbReference type="SAM" id="MobiDB-lite"/>
    </source>
</evidence>
<evidence type="ECO:0000305" key="8"/>
<accession>Q5RDG4</accession>
<sequence length="505" mass="56782">MRLRRLALFPGVALLLAAARLAAASDVLELTDDNFESRISDTGSAGLMLVEFFAPWCGHCKRLAPEYEAAATRLKGIVPLAKVDCTANTNTCNKYGVSGYPTLKIFRDGEEAGAYDGPRTADGIVSHLKKQAGPASVPLRTEEEFKKFISDKDASIVGFFDDSFSEAHSEFLKAASNLRDNYRFAHTNVESLVNEYDDNGEGIILFRPSHLTNKFEDKTVAYTEQKMTSGKIKKFIQENIFGICPHMTEDNKDLIQGKDLLIAYYDVDYEKNAKGSNYWRNRVMMVAKKFLDAGHKLNFAVASRKTFSHELSDFGLESTAGEIPVVAIRTAKGEKFVMQEEFSRDGKALERFLQDYFDGNLKRYLKSEPIPESNDGPVKVVVAENFDEIVNNENKDVLIEFYAPWCGHCKNLEPKYKELGEKLSKDPNIVIAKMDATANDVPSPYEVRGFPTIYFSPANKKLNPKKYEGGRELSDFISYLQREATNPPVIQEEKPKKKKKAQEDL</sequence>
<name>PDIA3_PONAB</name>
<gene>
    <name type="primary">PDIA3</name>
</gene>
<proteinExistence type="evidence at transcript level"/>
<protein>
    <recommendedName>
        <fullName>Protein disulfide-isomerase A3</fullName>
        <ecNumber evidence="4">5.3.4.1</ecNumber>
    </recommendedName>
</protein>
<feature type="signal peptide" evidence="5">
    <location>
        <begin position="1"/>
        <end position="24"/>
    </location>
</feature>
<feature type="chain" id="PRO_0000292595" description="Protein disulfide-isomerase A3">
    <location>
        <begin position="25"/>
        <end position="505"/>
    </location>
</feature>
<feature type="domain" description="Thioredoxin 1" evidence="6">
    <location>
        <begin position="25"/>
        <end position="133"/>
    </location>
</feature>
<feature type="domain" description="Thioredoxin 2" evidence="6">
    <location>
        <begin position="343"/>
        <end position="485"/>
    </location>
</feature>
<feature type="region of interest" description="Disordered" evidence="7">
    <location>
        <begin position="484"/>
        <end position="505"/>
    </location>
</feature>
<feature type="short sequence motif" description="Prevents secretion from ER" evidence="2">
    <location>
        <begin position="502"/>
        <end position="505"/>
    </location>
</feature>
<feature type="compositionally biased region" description="Basic and acidic residues" evidence="7">
    <location>
        <begin position="491"/>
        <end position="505"/>
    </location>
</feature>
<feature type="active site" description="Nucleophile" evidence="4">
    <location>
        <position position="57"/>
    </location>
</feature>
<feature type="active site" description="Nucleophile" evidence="4">
    <location>
        <position position="60"/>
    </location>
</feature>
<feature type="active site" description="Nucleophile" evidence="4">
    <location>
        <position position="406"/>
    </location>
</feature>
<feature type="active site" description="Nucleophile" evidence="4">
    <location>
        <position position="409"/>
    </location>
</feature>
<feature type="site" description="Contributes to redox potential value" evidence="1">
    <location>
        <position position="58"/>
    </location>
</feature>
<feature type="site" description="Contributes to redox potential value" evidence="1">
    <location>
        <position position="59"/>
    </location>
</feature>
<feature type="site" description="Lowers pKa of C-terminal Cys of first active site" evidence="1">
    <location>
        <position position="119"/>
    </location>
</feature>
<feature type="site" description="Contributes to redox potential value" evidence="1">
    <location>
        <position position="407"/>
    </location>
</feature>
<feature type="site" description="Contributes to redox potential value" evidence="1">
    <location>
        <position position="408"/>
    </location>
</feature>
<feature type="site" description="Lowers pKa of C-terminal Cys of second active site" evidence="1">
    <location>
        <position position="471"/>
    </location>
</feature>
<feature type="modified residue" description="N6-methyllysine" evidence="4">
    <location>
        <position position="61"/>
    </location>
</feature>
<feature type="modified residue" description="N6-succinyllysine" evidence="3">
    <location>
        <position position="129"/>
    </location>
</feature>
<feature type="modified residue" description="N6-acetyllysine" evidence="3">
    <location>
        <position position="152"/>
    </location>
</feature>
<feature type="modified residue" description="N6-succinyllysine" evidence="3">
    <location>
        <position position="218"/>
    </location>
</feature>
<feature type="modified residue" description="N6-acetyllysine" evidence="3">
    <location>
        <position position="252"/>
    </location>
</feature>
<feature type="modified residue" description="Phosphothreonine" evidence="4">
    <location>
        <position position="319"/>
    </location>
</feature>
<feature type="modified residue" description="N6-acetyllysine" evidence="3">
    <location>
        <position position="362"/>
    </location>
</feature>
<feature type="modified residue" description="N6-acetyllysine" evidence="3">
    <location>
        <position position="494"/>
    </location>
</feature>
<feature type="disulfide bond" description="Redox-active; reversible" evidence="4 6">
    <location>
        <begin position="57"/>
        <end position="60"/>
    </location>
</feature>
<feature type="disulfide bond" description="Interchain (with TAPBP); in linked form; reversible" evidence="4">
    <location>
        <position position="57"/>
    </location>
</feature>
<feature type="disulfide bond" evidence="4">
    <location>
        <begin position="85"/>
        <end position="92"/>
    </location>
</feature>
<feature type="disulfide bond" description="Redox-active" evidence="4 6">
    <location>
        <begin position="406"/>
        <end position="409"/>
    </location>
</feature>
<reference key="1">
    <citation type="submission" date="2004-11" db="EMBL/GenBank/DDBJ databases">
        <authorList>
            <consortium name="The German cDNA consortium"/>
        </authorList>
    </citation>
    <scope>NUCLEOTIDE SEQUENCE [LARGE SCALE MRNA]</scope>
    <source>
        <tissue>Heart</tissue>
    </source>
</reference>
<keyword id="KW-0007">Acetylation</keyword>
<keyword id="KW-1064">Adaptive immunity</keyword>
<keyword id="KW-1015">Disulfide bond</keyword>
<keyword id="KW-0256">Endoplasmic reticulum</keyword>
<keyword id="KW-0391">Immunity</keyword>
<keyword id="KW-0413">Isomerase</keyword>
<keyword id="KW-0488">Methylation</keyword>
<keyword id="KW-0597">Phosphoprotein</keyword>
<keyword id="KW-0676">Redox-active center</keyword>
<keyword id="KW-1185">Reference proteome</keyword>
<keyword id="KW-0677">Repeat</keyword>
<keyword id="KW-0732">Signal</keyword>
<comment type="function">
    <text evidence="4">Protein disulfide isomerase that catalyzes the formation, isomerization, and reduction or oxidation of disulfide bonds in client proteins and functions as a protein folding chaperone. Core component of the major histocompatibility complex class I (MHC I) peptide loading complex where it functions as an essential folding chaperone for TAPBP. Through TAPBP, assists the dynamic assembly of the MHC I complex with high affinity antigens in the endoplasmic reticulum. Therefore, plays a crucial role in the presentation of antigens to cytotoxic T cells in adaptive immunity.</text>
</comment>
<comment type="catalytic activity">
    <reaction evidence="4">
        <text>Catalyzes the rearrangement of -S-S- bonds in proteins.</text>
        <dbReference type="EC" id="5.3.4.1"/>
    </reaction>
</comment>
<comment type="subunit">
    <text evidence="3 4">Part of the major histocompatibility complex class I (MHC I) peptide loading complex composed of TAP1, TAP2, B2M, MHC heavy chain, TAPBP, PDIA3, and CALR. Interacts with ERP27 and CANX. Interacts with SERPINA2 and SERPINA1 (By similarity). Interacts with ATP2A2 (By similarity).</text>
</comment>
<comment type="subcellular location">
    <subcellularLocation>
        <location evidence="4">Endoplasmic reticulum</location>
    </subcellularLocation>
    <subcellularLocation>
        <location evidence="2">Endoplasmic reticulum lumen</location>
    </subcellularLocation>
    <subcellularLocation>
        <location evidence="4">Melanosome</location>
    </subcellularLocation>
</comment>
<comment type="PTM">
    <text evidence="4">Within the major histocompatibility complex class I (MHC I) peptide loading complex forms reversible disulfide-linked heterodimers with TAPBP as part of its protein folding chaperone activity. This is essential to assist the dynamic assembly of the MHC I complex with high affinity antigens in the endoplasmic reticulum.</text>
</comment>
<comment type="PTM">
    <text evidence="3">Phosphorylated.</text>
</comment>
<comment type="similarity">
    <text evidence="8">Belongs to the protein disulfide isomerase family.</text>
</comment>
<organism>
    <name type="scientific">Pongo abelii</name>
    <name type="common">Sumatran orangutan</name>
    <name type="synonym">Pongo pygmaeus abelii</name>
    <dbReference type="NCBI Taxonomy" id="9601"/>
    <lineage>
        <taxon>Eukaryota</taxon>
        <taxon>Metazoa</taxon>
        <taxon>Chordata</taxon>
        <taxon>Craniata</taxon>
        <taxon>Vertebrata</taxon>
        <taxon>Euteleostomi</taxon>
        <taxon>Mammalia</taxon>
        <taxon>Eutheria</taxon>
        <taxon>Euarchontoglires</taxon>
        <taxon>Primates</taxon>
        <taxon>Haplorrhini</taxon>
        <taxon>Catarrhini</taxon>
        <taxon>Hominidae</taxon>
        <taxon>Pongo</taxon>
    </lineage>
</organism>